<name>NACB_NEOFI</name>
<organism>
    <name type="scientific">Neosartorya fischeri (strain ATCC 1020 / DSM 3700 / CBS 544.65 / FGSC A1164 / JCM 1740 / NRRL 181 / WB 181)</name>
    <name type="common">Aspergillus fischerianus</name>
    <dbReference type="NCBI Taxonomy" id="331117"/>
    <lineage>
        <taxon>Eukaryota</taxon>
        <taxon>Fungi</taxon>
        <taxon>Dikarya</taxon>
        <taxon>Ascomycota</taxon>
        <taxon>Pezizomycotina</taxon>
        <taxon>Eurotiomycetes</taxon>
        <taxon>Eurotiomycetidae</taxon>
        <taxon>Eurotiales</taxon>
        <taxon>Aspergillaceae</taxon>
        <taxon>Aspergillus</taxon>
        <taxon>Aspergillus subgen. Fumigati</taxon>
    </lineage>
</organism>
<comment type="function">
    <text evidence="1">Component of the nascent polypeptide-associated complex (NAC), a dynamic component of the ribosomal exit tunnel, protecting the emerging polypeptides from interaction with other cytoplasmic proteins to ensure appropriate nascent protein targeting. The NAC complex also promotes mitochondrial protein import by enhancing productive ribosome interactions with the outer mitochondrial membrane and blocks the inappropriate interaction of ribosomes translating non-secretory nascent polypeptides with translocation sites in the membrane of the endoplasmic reticulum. EGD1 may act as a transcription factor that exert a negative effect on the expression of several genes that are transcribed by RNA polymerase II.</text>
</comment>
<comment type="subunit">
    <text evidence="1">Part of the nascent polypeptide-associated complex (NAC), consisting of egd2 and egd1. NAC associates with ribosomes via egd1 (By similarity).</text>
</comment>
<comment type="subcellular location">
    <subcellularLocation>
        <location evidence="1">Cytoplasm</location>
    </subcellularLocation>
    <subcellularLocation>
        <location evidence="1">Nucleus</location>
    </subcellularLocation>
    <text evidence="1">Predominantly cytoplasmic, may also transiently localize to the nucleus.</text>
</comment>
<comment type="similarity">
    <text evidence="4">Belongs to the NAC-beta family.</text>
</comment>
<reference key="1">
    <citation type="journal article" date="2008" name="PLoS Genet.">
        <title>Genomic islands in the pathogenic filamentous fungus Aspergillus fumigatus.</title>
        <authorList>
            <person name="Fedorova N.D."/>
            <person name="Khaldi N."/>
            <person name="Joardar V.S."/>
            <person name="Maiti R."/>
            <person name="Amedeo P."/>
            <person name="Anderson M.J."/>
            <person name="Crabtree J."/>
            <person name="Silva J.C."/>
            <person name="Badger J.H."/>
            <person name="Albarraq A."/>
            <person name="Angiuoli S."/>
            <person name="Bussey H."/>
            <person name="Bowyer P."/>
            <person name="Cotty P.J."/>
            <person name="Dyer P.S."/>
            <person name="Egan A."/>
            <person name="Galens K."/>
            <person name="Fraser-Liggett C.M."/>
            <person name="Haas B.J."/>
            <person name="Inman J.M."/>
            <person name="Kent R."/>
            <person name="Lemieux S."/>
            <person name="Malavazi I."/>
            <person name="Orvis J."/>
            <person name="Roemer T."/>
            <person name="Ronning C.M."/>
            <person name="Sundaram J.P."/>
            <person name="Sutton G."/>
            <person name="Turner G."/>
            <person name="Venter J.C."/>
            <person name="White O.R."/>
            <person name="Whitty B.R."/>
            <person name="Youngman P."/>
            <person name="Wolfe K.H."/>
            <person name="Goldman G.H."/>
            <person name="Wortman J.R."/>
            <person name="Jiang B."/>
            <person name="Denning D.W."/>
            <person name="Nierman W.C."/>
        </authorList>
    </citation>
    <scope>NUCLEOTIDE SEQUENCE [LARGE SCALE GENOMIC DNA]</scope>
    <source>
        <strain>ATCC 1020 / DSM 3700 / CBS 544.65 / FGSC A1164 / JCM 1740 / NRRL 181 / WB 181</strain>
    </source>
</reference>
<proteinExistence type="inferred from homology"/>
<sequence length="183" mass="20478">MDQAKLARMQASVRIGTFYSFLWIFEVLVSESVFLRMTATNFIDRGKGTPRRKVKKVHKSSGADDKKLQTTLKKMNVQPIQAIEEVNMFKEDGNVIHFAAPKVHASVPSNTFALYGNGEEKELTELVPGILNQLGPDSLASLRKLAESYQNMQKQAGTEGKKDEDEDDIPDLVEGENFESNVE</sequence>
<feature type="chain" id="PRO_0000282685" description="Nascent polypeptide-associated complex subunit beta">
    <location>
        <begin position="1"/>
        <end position="183"/>
    </location>
</feature>
<feature type="domain" description="NAC-A/B" evidence="2">
    <location>
        <begin position="62"/>
        <end position="127"/>
    </location>
</feature>
<feature type="region of interest" description="Disordered" evidence="3">
    <location>
        <begin position="150"/>
        <end position="183"/>
    </location>
</feature>
<feature type="compositionally biased region" description="Acidic residues" evidence="3">
    <location>
        <begin position="164"/>
        <end position="183"/>
    </location>
</feature>
<keyword id="KW-0963">Cytoplasm</keyword>
<keyword id="KW-0539">Nucleus</keyword>
<keyword id="KW-0653">Protein transport</keyword>
<keyword id="KW-1185">Reference proteome</keyword>
<keyword id="KW-0678">Repressor</keyword>
<keyword id="KW-0804">Transcription</keyword>
<keyword id="KW-0805">Transcription regulation</keyword>
<keyword id="KW-0813">Transport</keyword>
<evidence type="ECO:0000250" key="1"/>
<evidence type="ECO:0000255" key="2">
    <source>
        <dbReference type="PROSITE-ProRule" id="PRU00507"/>
    </source>
</evidence>
<evidence type="ECO:0000256" key="3">
    <source>
        <dbReference type="SAM" id="MobiDB-lite"/>
    </source>
</evidence>
<evidence type="ECO:0000305" key="4"/>
<dbReference type="EMBL" id="DS027698">
    <property type="protein sequence ID" value="EAW15569.1"/>
    <property type="molecule type" value="Genomic_DNA"/>
</dbReference>
<dbReference type="RefSeq" id="XP_001257466.1">
    <property type="nucleotide sequence ID" value="XM_001257465.1"/>
</dbReference>
<dbReference type="SMR" id="A1DL98"/>
<dbReference type="STRING" id="331117.A1DL98"/>
<dbReference type="EnsemblFungi" id="EAW15569">
    <property type="protein sequence ID" value="EAW15569"/>
    <property type="gene ID" value="NFIA_049070"/>
</dbReference>
<dbReference type="GeneID" id="4583980"/>
<dbReference type="KEGG" id="nfi:NFIA_049070"/>
<dbReference type="VEuPathDB" id="FungiDB:NFIA_049070"/>
<dbReference type="eggNOG" id="KOG2240">
    <property type="taxonomic scope" value="Eukaryota"/>
</dbReference>
<dbReference type="HOGENOM" id="CLU_098726_2_1_1"/>
<dbReference type="OMA" id="RMQQSVR"/>
<dbReference type="OrthoDB" id="8033832at2759"/>
<dbReference type="Proteomes" id="UP000006702">
    <property type="component" value="Unassembled WGS sequence"/>
</dbReference>
<dbReference type="GO" id="GO:0005854">
    <property type="term" value="C:nascent polypeptide-associated complex"/>
    <property type="evidence" value="ECO:0007669"/>
    <property type="project" value="EnsemblFungi"/>
</dbReference>
<dbReference type="GO" id="GO:0005634">
    <property type="term" value="C:nucleus"/>
    <property type="evidence" value="ECO:0007669"/>
    <property type="project" value="UniProtKB-SubCell"/>
</dbReference>
<dbReference type="GO" id="GO:0015031">
    <property type="term" value="P:protein transport"/>
    <property type="evidence" value="ECO:0007669"/>
    <property type="project" value="UniProtKB-KW"/>
</dbReference>
<dbReference type="CDD" id="cd22055">
    <property type="entry name" value="NAC_BTF3"/>
    <property type="match status" value="1"/>
</dbReference>
<dbReference type="FunFam" id="2.20.70.30:FF:000003">
    <property type="entry name" value="Nascent polypeptide-associated complex subunit beta"/>
    <property type="match status" value="1"/>
</dbReference>
<dbReference type="Gene3D" id="2.20.70.30">
    <property type="entry name" value="Nascent polypeptide-associated complex domain"/>
    <property type="match status" value="1"/>
</dbReference>
<dbReference type="InterPro" id="IPR039370">
    <property type="entry name" value="BTF3"/>
</dbReference>
<dbReference type="InterPro" id="IPR038187">
    <property type="entry name" value="NAC_A/B_dom_sf"/>
</dbReference>
<dbReference type="InterPro" id="IPR002715">
    <property type="entry name" value="Nas_poly-pep-assoc_cplx_dom"/>
</dbReference>
<dbReference type="PANTHER" id="PTHR10351">
    <property type="entry name" value="TRANSCRIPTION FACTOR BTF3 FAMILY MEMBER"/>
    <property type="match status" value="1"/>
</dbReference>
<dbReference type="Pfam" id="PF01849">
    <property type="entry name" value="NAC"/>
    <property type="match status" value="1"/>
</dbReference>
<dbReference type="SMART" id="SM01407">
    <property type="entry name" value="NAC"/>
    <property type="match status" value="1"/>
</dbReference>
<dbReference type="PROSITE" id="PS51151">
    <property type="entry name" value="NAC_AB"/>
    <property type="match status" value="1"/>
</dbReference>
<accession>A1DL98</accession>
<protein>
    <recommendedName>
        <fullName>Nascent polypeptide-associated complex subunit beta</fullName>
        <shortName>NAC-beta</shortName>
    </recommendedName>
    <alternativeName>
        <fullName>Beta-NAC</fullName>
    </alternativeName>
</protein>
<gene>
    <name type="primary">egd1</name>
    <name type="ORF">NFIA_049070</name>
</gene>